<protein>
    <recommendedName>
        <fullName evidence="5">Sarcosine dehydrogenase, mitochondrial</fullName>
        <shortName>SarDH</shortName>
        <ecNumber evidence="2">1.5.8.3</ecNumber>
    </recommendedName>
</protein>
<accession>Q99LB7</accession>
<evidence type="ECO:0000250" key="1"/>
<evidence type="ECO:0000250" key="2">
    <source>
        <dbReference type="UniProtKB" id="Q64380"/>
    </source>
</evidence>
<evidence type="ECO:0000250" key="3">
    <source>
        <dbReference type="UniProtKB" id="Q9UL12"/>
    </source>
</evidence>
<evidence type="ECO:0000255" key="4"/>
<evidence type="ECO:0000305" key="5"/>
<evidence type="ECO:0000312" key="6">
    <source>
        <dbReference type="MGI" id="MGI:2183102"/>
    </source>
</evidence>
<evidence type="ECO:0007744" key="7">
    <source>
    </source>
</evidence>
<evidence type="ECO:0007744" key="8">
    <source>
    </source>
</evidence>
<feature type="transit peptide" description="Mitochondrion" evidence="4">
    <location>
        <begin position="1"/>
        <end position="22"/>
    </location>
</feature>
<feature type="chain" id="PRO_0000010771" description="Sarcosine dehydrogenase, mitochondrial">
    <location>
        <begin position="23"/>
        <end position="919"/>
    </location>
</feature>
<feature type="modified residue" description="N6-succinyllysine" evidence="8">
    <location>
        <position position="38"/>
    </location>
</feature>
<feature type="modified residue" description="Tele-8alpha-FAD histidine" evidence="1">
    <location>
        <position position="109"/>
    </location>
</feature>
<feature type="modified residue" description="N6-acetyllysine; alternate" evidence="7">
    <location>
        <position position="174"/>
    </location>
</feature>
<feature type="modified residue" description="N6-succinyllysine; alternate" evidence="8">
    <location>
        <position position="174"/>
    </location>
</feature>
<feature type="modified residue" description="N6-succinyllysine" evidence="8">
    <location>
        <position position="278"/>
    </location>
</feature>
<feature type="modified residue" description="N6-succinyllysine" evidence="8">
    <location>
        <position position="378"/>
    </location>
</feature>
<feature type="modified residue" description="N6-succinyllysine" evidence="8">
    <location>
        <position position="392"/>
    </location>
</feature>
<feature type="modified residue" description="N6-succinyllysine" evidence="8">
    <location>
        <position position="535"/>
    </location>
</feature>
<feature type="modified residue" description="N6-acetyllysine" evidence="7">
    <location>
        <position position="560"/>
    </location>
</feature>
<feature type="modified residue" description="N6-acetyllysine" evidence="7">
    <location>
        <position position="776"/>
    </location>
</feature>
<feature type="modified residue" description="Phosphotyrosine" evidence="3">
    <location>
        <position position="778"/>
    </location>
</feature>
<feature type="modified residue" description="N6-acetyllysine; alternate" evidence="7">
    <location>
        <position position="803"/>
    </location>
</feature>
<feature type="modified residue" description="N6-succinyllysine; alternate" evidence="8">
    <location>
        <position position="803"/>
    </location>
</feature>
<feature type="modified residue" description="N6-acetyllysine; alternate" evidence="7">
    <location>
        <position position="885"/>
    </location>
</feature>
<feature type="modified residue" description="N6-succinyllysine; alternate" evidence="8">
    <location>
        <position position="885"/>
    </location>
</feature>
<feature type="modified residue" description="N6-acetyllysine; alternate" evidence="7">
    <location>
        <position position="905"/>
    </location>
</feature>
<feature type="modified residue" description="N6-succinyllysine; alternate" evidence="8">
    <location>
        <position position="905"/>
    </location>
</feature>
<keyword id="KW-0007">Acetylation</keyword>
<keyword id="KW-0274">FAD</keyword>
<keyword id="KW-0285">Flavoprotein</keyword>
<keyword id="KW-0496">Mitochondrion</keyword>
<keyword id="KW-0560">Oxidoreductase</keyword>
<keyword id="KW-0597">Phosphoprotein</keyword>
<keyword id="KW-1185">Reference proteome</keyword>
<keyword id="KW-0809">Transit peptide</keyword>
<gene>
    <name evidence="6" type="primary">Sardh</name>
</gene>
<reference key="1">
    <citation type="journal article" date="2004" name="Genome Res.">
        <title>The status, quality, and expansion of the NIH full-length cDNA project: the Mammalian Gene Collection (MGC).</title>
        <authorList>
            <consortium name="The MGC Project Team"/>
        </authorList>
    </citation>
    <scope>NUCLEOTIDE SEQUENCE [LARGE SCALE MRNA]</scope>
    <source>
        <strain>FVB/N</strain>
        <tissue>Mammary tumor</tissue>
    </source>
</reference>
<reference key="2">
    <citation type="journal article" date="2010" name="Cell">
        <title>A tissue-specific atlas of mouse protein phosphorylation and expression.</title>
        <authorList>
            <person name="Huttlin E.L."/>
            <person name="Jedrychowski M.P."/>
            <person name="Elias J.E."/>
            <person name="Goswami T."/>
            <person name="Rad R."/>
            <person name="Beausoleil S.A."/>
            <person name="Villen J."/>
            <person name="Haas W."/>
            <person name="Sowa M.E."/>
            <person name="Gygi S.P."/>
        </authorList>
    </citation>
    <scope>IDENTIFICATION BY MASS SPECTROMETRY [LARGE SCALE ANALYSIS]</scope>
    <source>
        <tissue>Brain</tissue>
        <tissue>Brown adipose tissue</tissue>
        <tissue>Kidney</tissue>
        <tissue>Liver</tissue>
        <tissue>Lung</tissue>
        <tissue>Pancreas</tissue>
        <tissue>Spleen</tissue>
        <tissue>Testis</tissue>
    </source>
</reference>
<reference key="3">
    <citation type="journal article" date="2013" name="Mol. Cell">
        <title>SIRT5-mediated lysine desuccinylation impacts diverse metabolic pathways.</title>
        <authorList>
            <person name="Park J."/>
            <person name="Chen Y."/>
            <person name="Tishkoff D.X."/>
            <person name="Peng C."/>
            <person name="Tan M."/>
            <person name="Dai L."/>
            <person name="Xie Z."/>
            <person name="Zhang Y."/>
            <person name="Zwaans B.M."/>
            <person name="Skinner M.E."/>
            <person name="Lombard D.B."/>
            <person name="Zhao Y."/>
        </authorList>
    </citation>
    <scope>SUCCINYLATION [LARGE SCALE ANALYSIS] AT LYS-38; LYS-174; LYS-278; LYS-378; LYS-392; LYS-535; LYS-803; LYS-885 AND LYS-905</scope>
    <scope>IDENTIFICATION BY MASS SPECTROMETRY [LARGE SCALE ANALYSIS]</scope>
    <source>
        <tissue>Liver</tissue>
    </source>
</reference>
<reference key="4">
    <citation type="journal article" date="2013" name="Proc. Natl. Acad. Sci. U.S.A.">
        <title>Label-free quantitative proteomics of the lysine acetylome in mitochondria identifies substrates of SIRT3 in metabolic pathways.</title>
        <authorList>
            <person name="Rardin M.J."/>
            <person name="Newman J.C."/>
            <person name="Held J.M."/>
            <person name="Cusack M.P."/>
            <person name="Sorensen D.J."/>
            <person name="Li B."/>
            <person name="Schilling B."/>
            <person name="Mooney S.D."/>
            <person name="Kahn C.R."/>
            <person name="Verdin E."/>
            <person name="Gibson B.W."/>
        </authorList>
    </citation>
    <scope>ACETYLATION [LARGE SCALE ANALYSIS] AT LYS-174; LYS-560; LYS-776; LYS-803; LYS-885 AND LYS-905</scope>
    <scope>IDENTIFICATION BY MASS SPECTROMETRY [LARGE SCALE ANALYSIS]</scope>
    <source>
        <tissue>Liver</tissue>
    </source>
</reference>
<name>SARDH_MOUSE</name>
<comment type="function">
    <text evidence="2">Catalyzes the last step of the oxidative degradation of choline to glycine. Converts sarcosine into glycine.</text>
</comment>
<comment type="catalytic activity">
    <reaction evidence="2">
        <text>(6S)-5,6,7,8-tetrahydrofolyl-(gamma-L-Glu)(n) + sarcosine + oxidized [electron-transfer flavoprotein] + H(+) = (6R)-5,10-methylenetetrahydrofolyl-(gamma-L-Glu)(n) + reduced [electron-transfer flavoprotein] + glycine</text>
        <dbReference type="Rhea" id="RHEA:19793"/>
        <dbReference type="Rhea" id="RHEA-COMP:10685"/>
        <dbReference type="Rhea" id="RHEA-COMP:10686"/>
        <dbReference type="Rhea" id="RHEA-COMP:13257"/>
        <dbReference type="Rhea" id="RHEA-COMP:14738"/>
        <dbReference type="ChEBI" id="CHEBI:15378"/>
        <dbReference type="ChEBI" id="CHEBI:57305"/>
        <dbReference type="ChEBI" id="CHEBI:57433"/>
        <dbReference type="ChEBI" id="CHEBI:57692"/>
        <dbReference type="ChEBI" id="CHEBI:58307"/>
        <dbReference type="ChEBI" id="CHEBI:136572"/>
        <dbReference type="ChEBI" id="CHEBI:141005"/>
        <dbReference type="EC" id="1.5.8.3"/>
    </reaction>
    <physiologicalReaction direction="left-to-right" evidence="2">
        <dbReference type="Rhea" id="RHEA:19794"/>
    </physiologicalReaction>
</comment>
<comment type="cofactor">
    <cofactor evidence="2">
        <name>FAD</name>
        <dbReference type="ChEBI" id="CHEBI:57692"/>
    </cofactor>
    <text evidence="2">Binds 1 FAD covalently per monomer.</text>
</comment>
<comment type="pathway">
    <text evidence="2">Amine and polyamine degradation; sarcosine degradation; formaldehyde and glycine from sarcosine: step 1/1.</text>
</comment>
<comment type="subcellular location">
    <subcellularLocation>
        <location evidence="2">Mitochondrion matrix</location>
    </subcellularLocation>
</comment>
<comment type="similarity">
    <text evidence="5">Belongs to the GcvT family.</text>
</comment>
<dbReference type="EC" id="1.5.8.3" evidence="2"/>
<dbReference type="EMBL" id="BC003456">
    <property type="protein sequence ID" value="AAH03456.1"/>
    <property type="molecule type" value="mRNA"/>
</dbReference>
<dbReference type="CCDS" id="CCDS15826.1"/>
<dbReference type="RefSeq" id="NP_619606.1">
    <property type="nucleotide sequence ID" value="NM_138665.2"/>
</dbReference>
<dbReference type="RefSeq" id="XP_006497851.1">
    <property type="nucleotide sequence ID" value="XM_006497788.5"/>
</dbReference>
<dbReference type="RefSeq" id="XP_006497852.1">
    <property type="nucleotide sequence ID" value="XM_006497789.5"/>
</dbReference>
<dbReference type="SMR" id="Q99LB7"/>
<dbReference type="BioGRID" id="228656">
    <property type="interactions" value="2"/>
</dbReference>
<dbReference type="FunCoup" id="Q99LB7">
    <property type="interactions" value="767"/>
</dbReference>
<dbReference type="STRING" id="10090.ENSMUSP00000099950"/>
<dbReference type="GlyGen" id="Q99LB7">
    <property type="glycosylation" value="1 site, 1 O-linked glycan (1 site)"/>
</dbReference>
<dbReference type="iPTMnet" id="Q99LB7"/>
<dbReference type="PhosphoSitePlus" id="Q99LB7"/>
<dbReference type="SwissPalm" id="Q99LB7"/>
<dbReference type="jPOST" id="Q99LB7"/>
<dbReference type="PaxDb" id="10090-ENSMUSP00000099950"/>
<dbReference type="ProteomicsDB" id="253397"/>
<dbReference type="Pumba" id="Q99LB7"/>
<dbReference type="Antibodypedia" id="31926">
    <property type="antibodies" value="68 antibodies from 18 providers"/>
</dbReference>
<dbReference type="DNASU" id="192166"/>
<dbReference type="Ensembl" id="ENSMUST00000102886.10">
    <property type="protein sequence ID" value="ENSMUSP00000099950.4"/>
    <property type="gene ID" value="ENSMUSG00000009614.17"/>
</dbReference>
<dbReference type="GeneID" id="192166"/>
<dbReference type="KEGG" id="mmu:192166"/>
<dbReference type="UCSC" id="uc008ixg.2">
    <property type="organism name" value="mouse"/>
</dbReference>
<dbReference type="AGR" id="MGI:2183102"/>
<dbReference type="CTD" id="1757"/>
<dbReference type="MGI" id="MGI:2183102">
    <property type="gene designation" value="Sardh"/>
</dbReference>
<dbReference type="VEuPathDB" id="HostDB:ENSMUSG00000009614"/>
<dbReference type="eggNOG" id="KOG2844">
    <property type="taxonomic scope" value="Eukaryota"/>
</dbReference>
<dbReference type="GeneTree" id="ENSGT00940000157589"/>
<dbReference type="HOGENOM" id="CLU_007884_11_4_1"/>
<dbReference type="InParanoid" id="Q99LB7"/>
<dbReference type="OMA" id="MVFKYDQ"/>
<dbReference type="OrthoDB" id="498204at2759"/>
<dbReference type="PhylomeDB" id="Q99LB7"/>
<dbReference type="TreeFam" id="TF314735"/>
<dbReference type="Reactome" id="R-MMU-6798163">
    <property type="pathway name" value="Choline catabolism"/>
</dbReference>
<dbReference type="UniPathway" id="UPA00292">
    <property type="reaction ID" value="UER00398"/>
</dbReference>
<dbReference type="BioGRID-ORCS" id="192166">
    <property type="hits" value="2 hits in 78 CRISPR screens"/>
</dbReference>
<dbReference type="ChiTaRS" id="Sardh">
    <property type="organism name" value="mouse"/>
</dbReference>
<dbReference type="PRO" id="PR:Q99LB7"/>
<dbReference type="Proteomes" id="UP000000589">
    <property type="component" value="Chromosome 2"/>
</dbReference>
<dbReference type="RNAct" id="Q99LB7">
    <property type="molecule type" value="protein"/>
</dbReference>
<dbReference type="Bgee" id="ENSMUSG00000009614">
    <property type="expression patterns" value="Expressed in left lobe of liver and 162 other cell types or tissues"/>
</dbReference>
<dbReference type="ExpressionAtlas" id="Q99LB7">
    <property type="expression patterns" value="baseline and differential"/>
</dbReference>
<dbReference type="GO" id="GO:0005759">
    <property type="term" value="C:mitochondrial matrix"/>
    <property type="evidence" value="ECO:0007669"/>
    <property type="project" value="UniProtKB-SubCell"/>
</dbReference>
<dbReference type="GO" id="GO:0005739">
    <property type="term" value="C:mitochondrion"/>
    <property type="evidence" value="ECO:0000314"/>
    <property type="project" value="UniProtKB"/>
</dbReference>
<dbReference type="GO" id="GO:0008480">
    <property type="term" value="F:sarcosine dehydrogenase activity"/>
    <property type="evidence" value="ECO:0007669"/>
    <property type="project" value="UniProtKB-EC"/>
</dbReference>
<dbReference type="FunFam" id="3.30.1360.120:FF:000023">
    <property type="entry name" value="Sarcosine dehydrogenase"/>
    <property type="match status" value="1"/>
</dbReference>
<dbReference type="FunFam" id="3.30.9.10:FF:000046">
    <property type="entry name" value="Sarcosine dehydrogenase"/>
    <property type="match status" value="1"/>
</dbReference>
<dbReference type="FunFam" id="3.50.50.60:FF:000769">
    <property type="entry name" value="Sarcosine dehydrogenase"/>
    <property type="match status" value="1"/>
</dbReference>
<dbReference type="FunFam" id="2.40.30.110:FF:000006">
    <property type="entry name" value="Sarcosine dehydrogenase, mitochondrial"/>
    <property type="match status" value="1"/>
</dbReference>
<dbReference type="FunFam" id="3.30.70.1400:FF:000004">
    <property type="entry name" value="Sarcosine dehydrogenase, mitochondrial"/>
    <property type="match status" value="1"/>
</dbReference>
<dbReference type="FunFam" id="3.30.9.10:FF:000009">
    <property type="entry name" value="Sarcosine dehydrogenase, mitochondrial"/>
    <property type="match status" value="1"/>
</dbReference>
<dbReference type="Gene3D" id="2.40.30.110">
    <property type="entry name" value="Aminomethyltransferase beta-barrel domains"/>
    <property type="match status" value="1"/>
</dbReference>
<dbReference type="Gene3D" id="3.30.70.1400">
    <property type="entry name" value="Aminomethyltransferase beta-barrel domains"/>
    <property type="match status" value="1"/>
</dbReference>
<dbReference type="Gene3D" id="3.30.9.10">
    <property type="entry name" value="D-Amino Acid Oxidase, subunit A, domain 2"/>
    <property type="match status" value="1"/>
</dbReference>
<dbReference type="Gene3D" id="3.50.50.60">
    <property type="entry name" value="FAD/NAD(P)-binding domain"/>
    <property type="match status" value="1"/>
</dbReference>
<dbReference type="Gene3D" id="3.30.1360.120">
    <property type="entry name" value="Probable tRNA modification gtpase trme, domain 1"/>
    <property type="match status" value="1"/>
</dbReference>
<dbReference type="InterPro" id="IPR006076">
    <property type="entry name" value="FAD-dep_OxRdtase"/>
</dbReference>
<dbReference type="InterPro" id="IPR036188">
    <property type="entry name" value="FAD/NAD-bd_sf"/>
</dbReference>
<dbReference type="InterPro" id="IPR032503">
    <property type="entry name" value="FAO_M"/>
</dbReference>
<dbReference type="InterPro" id="IPR013977">
    <property type="entry name" value="GCST_C"/>
</dbReference>
<dbReference type="InterPro" id="IPR006222">
    <property type="entry name" value="GCV_T_N"/>
</dbReference>
<dbReference type="InterPro" id="IPR028896">
    <property type="entry name" value="GcvT/YgfZ/DmdA"/>
</dbReference>
<dbReference type="InterPro" id="IPR029043">
    <property type="entry name" value="GcvT/YgfZ_C"/>
</dbReference>
<dbReference type="InterPro" id="IPR027266">
    <property type="entry name" value="TrmE/GcvT_dom1"/>
</dbReference>
<dbReference type="PANTHER" id="PTHR43757">
    <property type="entry name" value="AMINOMETHYLTRANSFERASE"/>
    <property type="match status" value="1"/>
</dbReference>
<dbReference type="PANTHER" id="PTHR43757:SF11">
    <property type="entry name" value="SARCOSINE DEHYDROGENASE"/>
    <property type="match status" value="1"/>
</dbReference>
<dbReference type="Pfam" id="PF01266">
    <property type="entry name" value="DAO"/>
    <property type="match status" value="1"/>
</dbReference>
<dbReference type="Pfam" id="PF16350">
    <property type="entry name" value="FAO_M"/>
    <property type="match status" value="1"/>
</dbReference>
<dbReference type="Pfam" id="PF01571">
    <property type="entry name" value="GCV_T"/>
    <property type="match status" value="1"/>
</dbReference>
<dbReference type="Pfam" id="PF08669">
    <property type="entry name" value="GCV_T_C"/>
    <property type="match status" value="1"/>
</dbReference>
<dbReference type="SUPFAM" id="SSF101790">
    <property type="entry name" value="Aminomethyltransferase beta-barrel domain"/>
    <property type="match status" value="1"/>
</dbReference>
<dbReference type="SUPFAM" id="SSF54373">
    <property type="entry name" value="FAD-linked reductases, C-terminal domain"/>
    <property type="match status" value="1"/>
</dbReference>
<dbReference type="SUPFAM" id="SSF51905">
    <property type="entry name" value="FAD/NAD(P)-binding domain"/>
    <property type="match status" value="1"/>
</dbReference>
<dbReference type="SUPFAM" id="SSF103025">
    <property type="entry name" value="Folate-binding domain"/>
    <property type="match status" value="1"/>
</dbReference>
<sequence>MASLSRVLRVAATCPRGRAAWNLGLQPLATEARPTTEKSVPYQRTLKEEAQGASVVPQGPSQPLPSTANVVVIGGGSLGCQTLYHLAKLGVGGAVLLERERLTSGTTWHTAGLLWQLRPSDVEVELLAHTRQVVSRDLEEETGLHTGWIQNGGLFIASNQQRLNEYKRLMSLGKAYGIESHVLSPAETKSLYPLMNVDDLYGTLYVPQDGTMDPAGTCTTLTRAAVARGAQVIENCAVTGIRVRTDDFGVRRVAAVETEHGSIQTPCVVNCAGVWASKVGRMAGVKVPLVAMHHAYVVTERIEGIQNMPNVRDHDASVYLRLQGDALSVGGYEANPIFWEEVSDKFAFGLFDLDWDVFTQHIEGAINRVPVLEKTGIKSTVCGPESFTPDHKPLMGEAPELRGFFLGCGFNSAGMMLGGGCGQELAHWIVHGRPEKDMYSYDIRRFHHSLTDHTRWIRERSHESYAKNYSVVFPHDEPLAGRNMRRDPLHEELLGQGCVFQERQGWERPGWFNPQETAQVLDYDYYGAYGNQAHKDYTYSRLLGDEYTFDFPPHHHMIQKECLACRGAAAVFNMSYFGKFYLLGVDARKAADWLFSADVNRPPGSTVYTCMLNQRGGTESDLTVSRLAPGTQASPLVPAFEGDCYYLAVGGAVAQHNWSHINTVLQDQEFRCQLMDSSEDLGMLSIQGPASRDILQDVLDADLSNEAFPFSTHQLVRAAGHLVRAIRLSFVGELGWELHVPRASCLPVYRAVMAAGARHGLVNAGYRAIDSLSIEKGYRHWHADLRPDDSPLEAGLAFTCKLKTSVPFLGREALEKQRATGLRRRLICLTVEEEVPMFGLEAIWRNGQVVGHVRRADFGFTVNKTIAYGYIRDPSGGPVSLDFVKNGEYALERMGVTYAAQVHLKSPFDPDNKRVKGIY</sequence>
<proteinExistence type="evidence at protein level"/>
<organism>
    <name type="scientific">Mus musculus</name>
    <name type="common">Mouse</name>
    <dbReference type="NCBI Taxonomy" id="10090"/>
    <lineage>
        <taxon>Eukaryota</taxon>
        <taxon>Metazoa</taxon>
        <taxon>Chordata</taxon>
        <taxon>Craniata</taxon>
        <taxon>Vertebrata</taxon>
        <taxon>Euteleostomi</taxon>
        <taxon>Mammalia</taxon>
        <taxon>Eutheria</taxon>
        <taxon>Euarchontoglires</taxon>
        <taxon>Glires</taxon>
        <taxon>Rodentia</taxon>
        <taxon>Myomorpha</taxon>
        <taxon>Muroidea</taxon>
        <taxon>Muridae</taxon>
        <taxon>Murinae</taxon>
        <taxon>Mus</taxon>
        <taxon>Mus</taxon>
    </lineage>
</organism>